<keyword id="KW-0028">Amino-acid biosynthesis</keyword>
<keyword id="KW-0067">ATP-binding</keyword>
<keyword id="KW-0220">Diaminopimelate biosynthesis</keyword>
<keyword id="KW-0418">Kinase</keyword>
<keyword id="KW-0457">Lysine biosynthesis</keyword>
<keyword id="KW-0547">Nucleotide-binding</keyword>
<keyword id="KW-0808">Transferase</keyword>
<proteinExistence type="inferred from homology"/>
<gene>
    <name type="primary">lysC</name>
    <name type="ordered locus">RF_1200</name>
</gene>
<feature type="chain" id="PRO_0000288720" description="Aspartokinase">
    <location>
        <begin position="1"/>
        <end position="401"/>
    </location>
</feature>
<accession>Q4UK84</accession>
<organism>
    <name type="scientific">Rickettsia felis (strain ATCC VR-1525 / URRWXCal2)</name>
    <name type="common">Rickettsia azadi</name>
    <dbReference type="NCBI Taxonomy" id="315456"/>
    <lineage>
        <taxon>Bacteria</taxon>
        <taxon>Pseudomonadati</taxon>
        <taxon>Pseudomonadota</taxon>
        <taxon>Alphaproteobacteria</taxon>
        <taxon>Rickettsiales</taxon>
        <taxon>Rickettsiaceae</taxon>
        <taxon>Rickettsieae</taxon>
        <taxon>Rickettsia</taxon>
        <taxon>spotted fever group</taxon>
    </lineage>
</organism>
<evidence type="ECO:0000305" key="1"/>
<reference key="1">
    <citation type="journal article" date="2005" name="PLoS Biol.">
        <title>The genome sequence of Rickettsia felis identifies the first putative conjugative plasmid in an obligate intracellular parasite.</title>
        <authorList>
            <person name="Ogata H."/>
            <person name="Renesto P."/>
            <person name="Audic S."/>
            <person name="Robert C."/>
            <person name="Blanc G."/>
            <person name="Fournier P.-E."/>
            <person name="Parinello H."/>
            <person name="Claverie J.-M."/>
            <person name="Raoult D."/>
        </authorList>
    </citation>
    <scope>NUCLEOTIDE SEQUENCE [LARGE SCALE GENOMIC DNA]</scope>
    <source>
        <strain>ATCC VR-1525 / URRWXCal2</strain>
    </source>
</reference>
<sequence length="401" mass="44340">MALIIQKFGGTSVANIDRIKKIAPIIKAEIAKNNQVIVVVSAMAGVTNQLVTLCNEVSSLNNISQFAEYDVALSSGEIVTASLLALALQEEDIKAQSFLAWQLPILTDNNHSKALVESITTDLLEKYLQLNTVPIIAGFQGTNKSNRLTTLGRGGSDTTAALIAAAMKAKRCDIYTDVEGIFTADPRIIPNAKKIKEIDFLEMLELASSGAKVLHPRAVELVMRYKIDMRVLSTFSPNTEGTLITSKDKNMENGIINSITSNKNLLKISVKSISLSFLQVANMITQNNNHIEFMQEIKNNEEYSFITNLTDENNLQALLTNLKNDKQIQDFTFDAEIATISLIGYGIKNDCKVLEMILSKLTKDNINVNMIQLSEVKITLLINDQDAEKTIFNLYNLFKIS</sequence>
<name>AK_RICFE</name>
<protein>
    <recommendedName>
        <fullName>Aspartokinase</fullName>
        <ecNumber>2.7.2.4</ecNumber>
    </recommendedName>
    <alternativeName>
        <fullName>Aspartate kinase</fullName>
    </alternativeName>
</protein>
<comment type="catalytic activity">
    <reaction>
        <text>L-aspartate + ATP = 4-phospho-L-aspartate + ADP</text>
        <dbReference type="Rhea" id="RHEA:23776"/>
        <dbReference type="ChEBI" id="CHEBI:29991"/>
        <dbReference type="ChEBI" id="CHEBI:30616"/>
        <dbReference type="ChEBI" id="CHEBI:57535"/>
        <dbReference type="ChEBI" id="CHEBI:456216"/>
        <dbReference type="EC" id="2.7.2.4"/>
    </reaction>
</comment>
<comment type="pathway">
    <text>Amino-acid biosynthesis; L-lysine biosynthesis via DAP pathway; (S)-tetrahydrodipicolinate from L-aspartate: step 1/4.</text>
</comment>
<comment type="pathway">
    <text>Amino-acid biosynthesis; L-methionine biosynthesis via de novo pathway; L-homoserine from L-aspartate: step 1/3.</text>
</comment>
<comment type="pathway">
    <text>Amino-acid biosynthesis; L-threonine biosynthesis; L-threonine from L-aspartate: step 1/5.</text>
</comment>
<comment type="similarity">
    <text evidence="1">Belongs to the aspartokinase family.</text>
</comment>
<dbReference type="EC" id="2.7.2.4"/>
<dbReference type="EMBL" id="CP000053">
    <property type="protein sequence ID" value="AAY62051.1"/>
    <property type="molecule type" value="Genomic_DNA"/>
</dbReference>
<dbReference type="SMR" id="Q4UK84"/>
<dbReference type="STRING" id="315456.RF_1200"/>
<dbReference type="KEGG" id="rfe:RF_1200"/>
<dbReference type="eggNOG" id="COG0527">
    <property type="taxonomic scope" value="Bacteria"/>
</dbReference>
<dbReference type="HOGENOM" id="CLU_009116_3_2_5"/>
<dbReference type="OrthoDB" id="9799110at2"/>
<dbReference type="UniPathway" id="UPA00034">
    <property type="reaction ID" value="UER00015"/>
</dbReference>
<dbReference type="UniPathway" id="UPA00050">
    <property type="reaction ID" value="UER00461"/>
</dbReference>
<dbReference type="UniPathway" id="UPA00051">
    <property type="reaction ID" value="UER00462"/>
</dbReference>
<dbReference type="Proteomes" id="UP000008548">
    <property type="component" value="Chromosome"/>
</dbReference>
<dbReference type="GO" id="GO:0005829">
    <property type="term" value="C:cytosol"/>
    <property type="evidence" value="ECO:0007669"/>
    <property type="project" value="TreeGrafter"/>
</dbReference>
<dbReference type="GO" id="GO:0004072">
    <property type="term" value="F:aspartate kinase activity"/>
    <property type="evidence" value="ECO:0007669"/>
    <property type="project" value="UniProtKB-EC"/>
</dbReference>
<dbReference type="GO" id="GO:0005524">
    <property type="term" value="F:ATP binding"/>
    <property type="evidence" value="ECO:0007669"/>
    <property type="project" value="UniProtKB-KW"/>
</dbReference>
<dbReference type="GO" id="GO:0019877">
    <property type="term" value="P:diaminopimelate biosynthetic process"/>
    <property type="evidence" value="ECO:0007669"/>
    <property type="project" value="UniProtKB-KW"/>
</dbReference>
<dbReference type="GO" id="GO:0009090">
    <property type="term" value="P:homoserine biosynthetic process"/>
    <property type="evidence" value="ECO:0007669"/>
    <property type="project" value="TreeGrafter"/>
</dbReference>
<dbReference type="GO" id="GO:0009089">
    <property type="term" value="P:lysine biosynthetic process via diaminopimelate"/>
    <property type="evidence" value="ECO:0007669"/>
    <property type="project" value="UniProtKB-UniPathway"/>
</dbReference>
<dbReference type="GO" id="GO:0009088">
    <property type="term" value="P:threonine biosynthetic process"/>
    <property type="evidence" value="ECO:0007669"/>
    <property type="project" value="UniProtKB-UniPathway"/>
</dbReference>
<dbReference type="CDD" id="cd04261">
    <property type="entry name" value="AAK_AKii-LysC-BS"/>
    <property type="match status" value="1"/>
</dbReference>
<dbReference type="FunFam" id="3.40.1160.10:FF:000002">
    <property type="entry name" value="Aspartokinase"/>
    <property type="match status" value="1"/>
</dbReference>
<dbReference type="Gene3D" id="3.40.1160.10">
    <property type="entry name" value="Acetylglutamate kinase-like"/>
    <property type="match status" value="1"/>
</dbReference>
<dbReference type="Gene3D" id="3.30.2130.10">
    <property type="entry name" value="VC0802-like"/>
    <property type="match status" value="1"/>
</dbReference>
<dbReference type="InterPro" id="IPR036393">
    <property type="entry name" value="AceGlu_kinase-like_sf"/>
</dbReference>
<dbReference type="InterPro" id="IPR045865">
    <property type="entry name" value="ACT-like_dom_sf"/>
</dbReference>
<dbReference type="InterPro" id="IPR054352">
    <property type="entry name" value="ACT_Aspartokinase"/>
</dbReference>
<dbReference type="InterPro" id="IPR041740">
    <property type="entry name" value="AKii-LysC-BS"/>
</dbReference>
<dbReference type="InterPro" id="IPR001048">
    <property type="entry name" value="Asp/Glu/Uridylate_kinase"/>
</dbReference>
<dbReference type="InterPro" id="IPR005260">
    <property type="entry name" value="Asp_kin_monofn"/>
</dbReference>
<dbReference type="InterPro" id="IPR001341">
    <property type="entry name" value="Asp_kinase"/>
</dbReference>
<dbReference type="InterPro" id="IPR018042">
    <property type="entry name" value="Aspartate_kinase_CS"/>
</dbReference>
<dbReference type="NCBIfam" id="TIGR00657">
    <property type="entry name" value="asp_kinases"/>
    <property type="match status" value="1"/>
</dbReference>
<dbReference type="NCBIfam" id="NF005154">
    <property type="entry name" value="PRK06635.1-2"/>
    <property type="match status" value="1"/>
</dbReference>
<dbReference type="NCBIfam" id="NF005155">
    <property type="entry name" value="PRK06635.1-4"/>
    <property type="match status" value="1"/>
</dbReference>
<dbReference type="NCBIfam" id="NF005158">
    <property type="entry name" value="PRK06635.2-2"/>
    <property type="match status" value="1"/>
</dbReference>
<dbReference type="PANTHER" id="PTHR21499">
    <property type="entry name" value="ASPARTATE KINASE"/>
    <property type="match status" value="1"/>
</dbReference>
<dbReference type="PANTHER" id="PTHR21499:SF3">
    <property type="entry name" value="ASPARTOKINASE"/>
    <property type="match status" value="1"/>
</dbReference>
<dbReference type="Pfam" id="PF00696">
    <property type="entry name" value="AA_kinase"/>
    <property type="match status" value="1"/>
</dbReference>
<dbReference type="Pfam" id="PF22468">
    <property type="entry name" value="ACT_9"/>
    <property type="match status" value="1"/>
</dbReference>
<dbReference type="PIRSF" id="PIRSF000726">
    <property type="entry name" value="Asp_kin"/>
    <property type="match status" value="1"/>
</dbReference>
<dbReference type="SUPFAM" id="SSF55021">
    <property type="entry name" value="ACT-like"/>
    <property type="match status" value="1"/>
</dbReference>
<dbReference type="SUPFAM" id="SSF53633">
    <property type="entry name" value="Carbamate kinase-like"/>
    <property type="match status" value="1"/>
</dbReference>
<dbReference type="PROSITE" id="PS00324">
    <property type="entry name" value="ASPARTOKINASE"/>
    <property type="match status" value="1"/>
</dbReference>